<accession>C0HM59</accession>
<protein>
    <recommendedName>
        <fullName evidence="3">Temporin-AVa</fullName>
    </recommendedName>
</protein>
<proteinExistence type="evidence at protein level"/>
<keyword id="KW-0027">Amidation</keyword>
<keyword id="KW-0878">Amphibian defense peptide</keyword>
<keyword id="KW-0044">Antibiotic</keyword>
<keyword id="KW-0929">Antimicrobial</keyword>
<keyword id="KW-0903">Direct protein sequencing</keyword>
<keyword id="KW-0964">Secreted</keyword>
<evidence type="ECO:0000250" key="1">
    <source>
        <dbReference type="UniProtKB" id="C5H0E0"/>
    </source>
</evidence>
<evidence type="ECO:0000269" key="2">
    <source>
    </source>
</evidence>
<evidence type="ECO:0000303" key="3">
    <source>
    </source>
</evidence>
<evidence type="ECO:0000305" key="4"/>
<feature type="peptide" id="PRO_0000457091" description="Temporin-AVa">
    <location>
        <begin position="1"/>
        <end position="13"/>
    </location>
</feature>
<feature type="modified residue" description="Leucine amide" evidence="2">
    <location>
        <position position="13"/>
    </location>
</feature>
<sequence length="13" mass="1312">GLEVLGKILSGIL</sequence>
<reference evidence="4" key="1">
    <citation type="journal article" date="2022" name="J. Am. Soc. Mass Spectrom.">
        <title>Mass Spectrometry Differentiation between Rana arvalis Populations Based on Their Skin Peptidome Composition.</title>
        <authorList>
            <person name="Samgina T.Y."/>
            <person name="Vasileva I.D."/>
            <person name="Trebse P."/>
            <person name="Torkar G."/>
            <person name="Surin A.K."/>
            <person name="Meng Z."/>
            <person name="Zubarev R.A."/>
            <person name="Lebedev A.T."/>
        </authorList>
    </citation>
    <scope>PROTEIN SEQUENCE</scope>
    <scope>IDENTIFICATION BY MASS SPECTROMETRY</scope>
    <scope>SUBCELLULAR LOCATION</scope>
    <scope>TISSUE SPECIFICITY</scope>
    <scope>AMIDATION AT LEU-13</scope>
    <source>
        <tissue evidence="3">Skin secretion</tissue>
    </source>
</reference>
<comment type="function">
    <text evidence="1">Antimicrobial peptide.</text>
</comment>
<comment type="subcellular location">
    <subcellularLocation>
        <location evidence="2">Secreted</location>
    </subcellularLocation>
</comment>
<comment type="tissue specificity">
    <text evidence="2">Expressed by the skin glands.</text>
</comment>
<comment type="mass spectrometry" mass="1309.83" method="Electrospray" evidence="2"/>
<comment type="similarity">
    <text evidence="4">Belongs to the frog skin active peptide (FSAP) family. Temporin subfamily.</text>
</comment>
<organism evidence="3">
    <name type="scientific">Rana arvalis</name>
    <name type="common">Moor frog</name>
    <dbReference type="NCBI Taxonomy" id="156871"/>
    <lineage>
        <taxon>Eukaryota</taxon>
        <taxon>Metazoa</taxon>
        <taxon>Chordata</taxon>
        <taxon>Craniata</taxon>
        <taxon>Vertebrata</taxon>
        <taxon>Euteleostomi</taxon>
        <taxon>Amphibia</taxon>
        <taxon>Batrachia</taxon>
        <taxon>Anura</taxon>
        <taxon>Neobatrachia</taxon>
        <taxon>Ranoidea</taxon>
        <taxon>Ranidae</taxon>
        <taxon>Rana</taxon>
        <taxon>Rana</taxon>
    </lineage>
</organism>
<name>TPAVA_RANAR</name>
<dbReference type="GO" id="GO:0005576">
    <property type="term" value="C:extracellular region"/>
    <property type="evidence" value="ECO:0000314"/>
    <property type="project" value="UniProtKB"/>
</dbReference>
<dbReference type="GO" id="GO:0042742">
    <property type="term" value="P:defense response to bacterium"/>
    <property type="evidence" value="ECO:0007669"/>
    <property type="project" value="UniProtKB-KW"/>
</dbReference>